<comment type="function">
    <text evidence="1">Essential cell division protein that stabilizes the FtsZ protofilaments by cross-linking them and that serves as a cytoplasmic membrane anchor for the Z ring. Also required for the recruitment to the septal ring of downstream cell division proteins.</text>
</comment>
<comment type="subunit">
    <text evidence="1">Interacts with FtsZ via their C-terminal domains.</text>
</comment>
<comment type="subcellular location">
    <subcellularLocation>
        <location evidence="1">Cell inner membrane</location>
        <topology evidence="1">Single-pass type I membrane protein</topology>
    </subcellularLocation>
    <text evidence="1">Localizes to the Z ring in an FtsZ-dependent manner.</text>
</comment>
<comment type="similarity">
    <text evidence="1">Belongs to the ZipA family.</text>
</comment>
<protein>
    <recommendedName>
        <fullName evidence="1">Cell division protein ZipA</fullName>
    </recommendedName>
</protein>
<name>ZIPA_SALPC</name>
<sequence length="328" mass="36346">MMQDLRLILIIVGAIAIIALLVHGFWTSRKERSSMFRDRPLKRMKSKRDDDSYDDDVEEDEGVGEVRVHRVNHAPGQSQEHDAPRQSPQHQYQPPYASAQPRPAAPPQPQAPMQQPVQQPVQPAPQPQQVQPSAPPVQPPQQQPAPPSQAPQPVAQPAPPPSAQTFQPAEPVVEAEPIVEEAPVVEKPQRKEAVIIMNVAAHHGSELNGEVLLNSIQQSGFKFGDMNIFHRHLSPDGSGPALFSLANMVNPGTFDPEMTDFTTPGVTIFMQVPSYGDALQNFKLMLQSAQHIADEVGGIVLDDQRRMMTPQKLREYQDRIREVMDANA</sequence>
<proteinExistence type="inferred from homology"/>
<keyword id="KW-0131">Cell cycle</keyword>
<keyword id="KW-0132">Cell division</keyword>
<keyword id="KW-0997">Cell inner membrane</keyword>
<keyword id="KW-1003">Cell membrane</keyword>
<keyword id="KW-0472">Membrane</keyword>
<keyword id="KW-0812">Transmembrane</keyword>
<keyword id="KW-1133">Transmembrane helix</keyword>
<accession>C0PZB3</accession>
<feature type="chain" id="PRO_1000200695" description="Cell division protein ZipA">
    <location>
        <begin position="1"/>
        <end position="328"/>
    </location>
</feature>
<feature type="topological domain" description="Periplasmic" evidence="1">
    <location>
        <begin position="1"/>
        <end position="6"/>
    </location>
</feature>
<feature type="transmembrane region" description="Helical" evidence="1">
    <location>
        <begin position="7"/>
        <end position="27"/>
    </location>
</feature>
<feature type="topological domain" description="Cytoplasmic" evidence="1">
    <location>
        <begin position="28"/>
        <end position="328"/>
    </location>
</feature>
<feature type="region of interest" description="Disordered" evidence="2">
    <location>
        <begin position="42"/>
        <end position="171"/>
    </location>
</feature>
<feature type="compositionally biased region" description="Acidic residues" evidence="2">
    <location>
        <begin position="51"/>
        <end position="63"/>
    </location>
</feature>
<feature type="compositionally biased region" description="Low complexity" evidence="2">
    <location>
        <begin position="85"/>
        <end position="102"/>
    </location>
</feature>
<feature type="compositionally biased region" description="Low complexity" evidence="2">
    <location>
        <begin position="111"/>
        <end position="132"/>
    </location>
</feature>
<feature type="compositionally biased region" description="Pro residues" evidence="2">
    <location>
        <begin position="133"/>
        <end position="162"/>
    </location>
</feature>
<organism>
    <name type="scientific">Salmonella paratyphi C (strain RKS4594)</name>
    <dbReference type="NCBI Taxonomy" id="476213"/>
    <lineage>
        <taxon>Bacteria</taxon>
        <taxon>Pseudomonadati</taxon>
        <taxon>Pseudomonadota</taxon>
        <taxon>Gammaproteobacteria</taxon>
        <taxon>Enterobacterales</taxon>
        <taxon>Enterobacteriaceae</taxon>
        <taxon>Salmonella</taxon>
    </lineage>
</organism>
<gene>
    <name evidence="1" type="primary">zipA</name>
    <name type="ordered locus">SPC_1232</name>
</gene>
<evidence type="ECO:0000255" key="1">
    <source>
        <dbReference type="HAMAP-Rule" id="MF_00509"/>
    </source>
</evidence>
<evidence type="ECO:0000256" key="2">
    <source>
        <dbReference type="SAM" id="MobiDB-lite"/>
    </source>
</evidence>
<reference key="1">
    <citation type="journal article" date="2009" name="PLoS ONE">
        <title>Salmonella paratyphi C: genetic divergence from Salmonella choleraesuis and pathogenic convergence with Salmonella typhi.</title>
        <authorList>
            <person name="Liu W.-Q."/>
            <person name="Feng Y."/>
            <person name="Wang Y."/>
            <person name="Zou Q.-H."/>
            <person name="Chen F."/>
            <person name="Guo J.-T."/>
            <person name="Peng Y.-H."/>
            <person name="Jin Y."/>
            <person name="Li Y.-G."/>
            <person name="Hu S.-N."/>
            <person name="Johnston R.N."/>
            <person name="Liu G.-R."/>
            <person name="Liu S.-L."/>
        </authorList>
    </citation>
    <scope>NUCLEOTIDE SEQUENCE [LARGE SCALE GENOMIC DNA]</scope>
    <source>
        <strain>RKS4594</strain>
    </source>
</reference>
<dbReference type="EMBL" id="CP000857">
    <property type="protein sequence ID" value="ACN45396.1"/>
    <property type="molecule type" value="Genomic_DNA"/>
</dbReference>
<dbReference type="RefSeq" id="WP_000983124.1">
    <property type="nucleotide sequence ID" value="NC_012125.1"/>
</dbReference>
<dbReference type="SMR" id="C0PZB3"/>
<dbReference type="KEGG" id="sei:SPC_1232"/>
<dbReference type="HOGENOM" id="CLU_030174_1_0_6"/>
<dbReference type="Proteomes" id="UP000001599">
    <property type="component" value="Chromosome"/>
</dbReference>
<dbReference type="GO" id="GO:0032153">
    <property type="term" value="C:cell division site"/>
    <property type="evidence" value="ECO:0007669"/>
    <property type="project" value="UniProtKB-UniRule"/>
</dbReference>
<dbReference type="GO" id="GO:0005886">
    <property type="term" value="C:plasma membrane"/>
    <property type="evidence" value="ECO:0007669"/>
    <property type="project" value="UniProtKB-SubCell"/>
</dbReference>
<dbReference type="GO" id="GO:0000917">
    <property type="term" value="P:division septum assembly"/>
    <property type="evidence" value="ECO:0007669"/>
    <property type="project" value="TreeGrafter"/>
</dbReference>
<dbReference type="GO" id="GO:0043093">
    <property type="term" value="P:FtsZ-dependent cytokinesis"/>
    <property type="evidence" value="ECO:0007669"/>
    <property type="project" value="UniProtKB-UniRule"/>
</dbReference>
<dbReference type="CDD" id="cd00231">
    <property type="entry name" value="ZipA"/>
    <property type="match status" value="1"/>
</dbReference>
<dbReference type="FunFam" id="3.30.1400.10:FF:000001">
    <property type="entry name" value="Cell division protein ZipA"/>
    <property type="match status" value="1"/>
</dbReference>
<dbReference type="Gene3D" id="3.30.1400.10">
    <property type="entry name" value="ZipA, C-terminal FtsZ-binding domain"/>
    <property type="match status" value="1"/>
</dbReference>
<dbReference type="HAMAP" id="MF_00509">
    <property type="entry name" value="ZipA"/>
    <property type="match status" value="1"/>
</dbReference>
<dbReference type="InterPro" id="IPR011919">
    <property type="entry name" value="Cell_div_ZipA"/>
</dbReference>
<dbReference type="InterPro" id="IPR007449">
    <property type="entry name" value="ZipA_FtsZ-bd_C"/>
</dbReference>
<dbReference type="InterPro" id="IPR036765">
    <property type="entry name" value="ZipA_FtsZ-bd_C_sf"/>
</dbReference>
<dbReference type="NCBIfam" id="TIGR02205">
    <property type="entry name" value="septum_zipA"/>
    <property type="match status" value="1"/>
</dbReference>
<dbReference type="PANTHER" id="PTHR38685">
    <property type="entry name" value="CELL DIVISION PROTEIN ZIPA"/>
    <property type="match status" value="1"/>
</dbReference>
<dbReference type="PANTHER" id="PTHR38685:SF1">
    <property type="entry name" value="CELL DIVISION PROTEIN ZIPA"/>
    <property type="match status" value="1"/>
</dbReference>
<dbReference type="Pfam" id="PF04354">
    <property type="entry name" value="ZipA_C"/>
    <property type="match status" value="1"/>
</dbReference>
<dbReference type="SMART" id="SM00771">
    <property type="entry name" value="ZipA_C"/>
    <property type="match status" value="1"/>
</dbReference>
<dbReference type="SUPFAM" id="SSF64383">
    <property type="entry name" value="Cell-division protein ZipA, C-terminal domain"/>
    <property type="match status" value="1"/>
</dbReference>